<organism>
    <name type="scientific">Oryza sativa subsp. indica</name>
    <name type="common">Rice</name>
    <dbReference type="NCBI Taxonomy" id="39946"/>
    <lineage>
        <taxon>Eukaryota</taxon>
        <taxon>Viridiplantae</taxon>
        <taxon>Streptophyta</taxon>
        <taxon>Embryophyta</taxon>
        <taxon>Tracheophyta</taxon>
        <taxon>Spermatophyta</taxon>
        <taxon>Magnoliopsida</taxon>
        <taxon>Liliopsida</taxon>
        <taxon>Poales</taxon>
        <taxon>Poaceae</taxon>
        <taxon>BOP clade</taxon>
        <taxon>Oryzoideae</taxon>
        <taxon>Oryzeae</taxon>
        <taxon>Oryzinae</taxon>
        <taxon>Oryza</taxon>
        <taxon>Oryza sativa</taxon>
    </lineage>
</organism>
<evidence type="ECO:0000255" key="1">
    <source>
        <dbReference type="HAMAP-Rule" id="MF_01358"/>
    </source>
</evidence>
<evidence type="ECO:0000305" key="2"/>
<comment type="function">
    <text evidence="1">NDH shuttles electrons from NAD(P)H:plastoquinone, via FMN and iron-sulfur (Fe-S) centers, to quinones in the photosynthetic chain and possibly in a chloroplast respiratory chain. The immediate electron acceptor for the enzyme in this species is believed to be plastoquinone. Couples the redox reaction to proton translocation, and thus conserves the redox energy in a proton gradient.</text>
</comment>
<comment type="catalytic activity">
    <reaction evidence="1">
        <text>a plastoquinone + NADH + (n+1) H(+)(in) = a plastoquinol + NAD(+) + n H(+)(out)</text>
        <dbReference type="Rhea" id="RHEA:42608"/>
        <dbReference type="Rhea" id="RHEA-COMP:9561"/>
        <dbReference type="Rhea" id="RHEA-COMP:9562"/>
        <dbReference type="ChEBI" id="CHEBI:15378"/>
        <dbReference type="ChEBI" id="CHEBI:17757"/>
        <dbReference type="ChEBI" id="CHEBI:57540"/>
        <dbReference type="ChEBI" id="CHEBI:57945"/>
        <dbReference type="ChEBI" id="CHEBI:62192"/>
    </reaction>
</comment>
<comment type="catalytic activity">
    <reaction evidence="1">
        <text>a plastoquinone + NADPH + (n+1) H(+)(in) = a plastoquinol + NADP(+) + n H(+)(out)</text>
        <dbReference type="Rhea" id="RHEA:42612"/>
        <dbReference type="Rhea" id="RHEA-COMP:9561"/>
        <dbReference type="Rhea" id="RHEA-COMP:9562"/>
        <dbReference type="ChEBI" id="CHEBI:15378"/>
        <dbReference type="ChEBI" id="CHEBI:17757"/>
        <dbReference type="ChEBI" id="CHEBI:57783"/>
        <dbReference type="ChEBI" id="CHEBI:58349"/>
        <dbReference type="ChEBI" id="CHEBI:62192"/>
    </reaction>
</comment>
<comment type="subunit">
    <text evidence="1">NDH is composed of at least 16 different subunits, 5 of which are encoded in the nucleus.</text>
</comment>
<comment type="subcellular location">
    <subcellularLocation>
        <location evidence="1">Plastid</location>
        <location evidence="1">Chloroplast thylakoid membrane</location>
        <topology evidence="1">Peripheral membrane protein</topology>
        <orientation evidence="1">Stromal side</orientation>
    </subcellularLocation>
</comment>
<comment type="miscellaneous">
    <text>There is a 56 residue fragment from the N-terminus in a second position on the plastid genome (corresponds to 9311163); it is not clear if this is transcribed.</text>
</comment>
<comment type="similarity">
    <text evidence="1">Belongs to the complex I 49 kDa subunit family.</text>
</comment>
<comment type="sequence caution" evidence="2">
    <conflict type="erroneous initiation">
        <sequence resource="EMBL-CDS" id="AAS46097"/>
    </conflict>
</comment>
<accession>P0C336</accession>
<accession>P12132</accession>
<accession>Q32765</accession>
<accession>Q6QXW9</accession>
<accession>Q6QXX8</accession>
<accession>Q6QY32</accession>
<accession>Q6QY41</accession>
<proteinExistence type="inferred from homology"/>
<feature type="chain" id="PRO_0000288702" description="NAD(P)H-quinone oxidoreductase subunit H, chloroplastic">
    <location>
        <begin position="1"/>
        <end position="393"/>
    </location>
</feature>
<keyword id="KW-0150">Chloroplast</keyword>
<keyword id="KW-0472">Membrane</keyword>
<keyword id="KW-0520">NAD</keyword>
<keyword id="KW-0521">NADP</keyword>
<keyword id="KW-0934">Plastid</keyword>
<keyword id="KW-0618">Plastoquinone</keyword>
<keyword id="KW-0874">Quinone</keyword>
<keyword id="KW-1185">Reference proteome</keyword>
<keyword id="KW-0793">Thylakoid</keyword>
<keyword id="KW-1278">Translocase</keyword>
<keyword id="KW-0813">Transport</keyword>
<dbReference type="EC" id="7.1.1.-" evidence="1"/>
<dbReference type="EMBL" id="AY522329">
    <property type="protein sequence ID" value="AAS46088.1"/>
    <property type="molecule type" value="Genomic_DNA"/>
</dbReference>
<dbReference type="EMBL" id="AY522329">
    <property type="protein sequence ID" value="AAS46097.1"/>
    <property type="status" value="ALT_INIT"/>
    <property type="molecule type" value="Genomic_DNA"/>
</dbReference>
<dbReference type="RefSeq" id="YP_009161415.1">
    <property type="nucleotide sequence ID" value="NC_027678.1"/>
</dbReference>
<dbReference type="RefSeq" id="YP_009161425.1">
    <property type="nucleotide sequence ID" value="NC_027678.1"/>
</dbReference>
<dbReference type="RefSeq" id="YP_654248.1">
    <property type="nucleotide sequence ID" value="NC_008155.1"/>
</dbReference>
<dbReference type="RefSeq" id="YP_654257.2">
    <property type="nucleotide sequence ID" value="NC_008155.1"/>
</dbReference>
<dbReference type="SMR" id="P0C336"/>
<dbReference type="STRING" id="39946.P0C336"/>
<dbReference type="GeneID" id="4126877"/>
<dbReference type="HOGENOM" id="CLU_015134_6_2_1"/>
<dbReference type="Proteomes" id="UP000007015">
    <property type="component" value="Chloroplast"/>
</dbReference>
<dbReference type="GO" id="GO:0009535">
    <property type="term" value="C:chloroplast thylakoid membrane"/>
    <property type="evidence" value="ECO:0007669"/>
    <property type="project" value="UniProtKB-SubCell"/>
</dbReference>
<dbReference type="GO" id="GO:0009536">
    <property type="term" value="C:plastid"/>
    <property type="evidence" value="ECO:0000305"/>
    <property type="project" value="Gramene"/>
</dbReference>
<dbReference type="GO" id="GO:0051287">
    <property type="term" value="F:NAD binding"/>
    <property type="evidence" value="ECO:0007669"/>
    <property type="project" value="InterPro"/>
</dbReference>
<dbReference type="GO" id="GO:0016655">
    <property type="term" value="F:oxidoreductase activity, acting on NAD(P)H, quinone or similar compound as acceptor"/>
    <property type="evidence" value="ECO:0007669"/>
    <property type="project" value="UniProtKB-UniRule"/>
</dbReference>
<dbReference type="GO" id="GO:0048038">
    <property type="term" value="F:quinone binding"/>
    <property type="evidence" value="ECO:0007669"/>
    <property type="project" value="UniProtKB-KW"/>
</dbReference>
<dbReference type="GO" id="GO:0019684">
    <property type="term" value="P:photosynthesis, light reaction"/>
    <property type="evidence" value="ECO:0007669"/>
    <property type="project" value="UniProtKB-UniRule"/>
</dbReference>
<dbReference type="Gene3D" id="1.10.645.10">
    <property type="entry name" value="Cytochrome-c3 Hydrogenase, chain B"/>
    <property type="match status" value="1"/>
</dbReference>
<dbReference type="HAMAP" id="MF_01358">
    <property type="entry name" value="NDH1_NuoD"/>
    <property type="match status" value="1"/>
</dbReference>
<dbReference type="InterPro" id="IPR001135">
    <property type="entry name" value="NADH_Q_OxRdtase_suD"/>
</dbReference>
<dbReference type="InterPro" id="IPR014029">
    <property type="entry name" value="NADH_UbQ_OxRdtase_49kDa_CS"/>
</dbReference>
<dbReference type="InterPro" id="IPR022885">
    <property type="entry name" value="NDH1_su_D/H"/>
</dbReference>
<dbReference type="InterPro" id="IPR029014">
    <property type="entry name" value="NiFe-Hase_large"/>
</dbReference>
<dbReference type="NCBIfam" id="NF004739">
    <property type="entry name" value="PRK06075.1"/>
    <property type="match status" value="1"/>
</dbReference>
<dbReference type="NCBIfam" id="NF005649">
    <property type="entry name" value="PRK07415.1"/>
    <property type="match status" value="1"/>
</dbReference>
<dbReference type="PANTHER" id="PTHR11993:SF10">
    <property type="entry name" value="NADH DEHYDROGENASE [UBIQUINONE] IRON-SULFUR PROTEIN 2, MITOCHONDRIAL"/>
    <property type="match status" value="1"/>
</dbReference>
<dbReference type="PANTHER" id="PTHR11993">
    <property type="entry name" value="NADH-UBIQUINONE OXIDOREDUCTASE 49 KDA SUBUNIT"/>
    <property type="match status" value="1"/>
</dbReference>
<dbReference type="Pfam" id="PF00346">
    <property type="entry name" value="Complex1_49kDa"/>
    <property type="match status" value="1"/>
</dbReference>
<dbReference type="SUPFAM" id="SSF56762">
    <property type="entry name" value="HydB/Nqo4-like"/>
    <property type="match status" value="1"/>
</dbReference>
<dbReference type="PROSITE" id="PS00535">
    <property type="entry name" value="COMPLEX1_49K"/>
    <property type="match status" value="1"/>
</dbReference>
<protein>
    <recommendedName>
        <fullName evidence="1">NAD(P)H-quinone oxidoreductase subunit H, chloroplastic</fullName>
        <ecNumber evidence="1">7.1.1.-</ecNumber>
    </recommendedName>
    <alternativeName>
        <fullName>NAD(P)H dehydrogenase subunit H</fullName>
    </alternativeName>
    <alternativeName>
        <fullName evidence="1">NADH-plastoquinone oxidoreductase 49 kDa subunit</fullName>
    </alternativeName>
    <alternativeName>
        <fullName evidence="1">NADH-plastoquinone oxidoreductase subunit H</fullName>
    </alternativeName>
</protein>
<gene>
    <name evidence="1" type="primary">ndhH</name>
    <name type="ORF">9311163</name>
    <name type="ORF">9311175</name>
</gene>
<sequence>MSLPLTRKDLMIVNMGPQHPSMHGVLRLIVTLDGEDVIDCEPILGYLHRGMEKIAENRTIIQYLPYVTRWDYLATMFTEAITVNAPEFLENIQIPQRASYIRVIMLELSRIASHLLWLGPFMADLGAQTPFFYIFRERELIYDLFEAATGMRMMHNYFRIGGVAADLPYGWIDKCLDFCDYFLRGVIEYQQLITQNPIFLERVEGVGFISGEEAVNWGLSGPMLRASGIQWDLRKVDLYESYNQFDWKVQWQKEGDSLARYLVRIGEMRESIKIIQQAVEKIPGGPYENLEVRRFKKAKNSEWNDFEYRFLGKKPSPNFELSKQELYARVEAPKGELGIYLVGDDSLFPWRWKIRPPGFINLQILPQLVKKMKLADIMTILGSIDIIMGEVDR</sequence>
<name>NDHH_ORYSI</name>
<reference key="1">
    <citation type="journal article" date="2004" name="Plant Physiol.">
        <title>A comparison of rice chloroplast genomes.</title>
        <authorList>
            <person name="Tang J."/>
            <person name="Xia H."/>
            <person name="Cao M."/>
            <person name="Zhang X."/>
            <person name="Zeng W."/>
            <person name="Hu S."/>
            <person name="Tong W."/>
            <person name="Wang J."/>
            <person name="Wang J."/>
            <person name="Yu J."/>
            <person name="Yang H."/>
            <person name="Zhu L."/>
        </authorList>
    </citation>
    <scope>NUCLEOTIDE SEQUENCE [LARGE SCALE GENOMIC DNA]</scope>
    <source>
        <strain>cv. 93-11</strain>
    </source>
</reference>
<geneLocation type="chloroplast"/>